<keyword id="KW-1185">Reference proteome</keyword>
<comment type="similarity">
    <text evidence="2">Belongs to the MacroD-type family.</text>
</comment>
<organism>
    <name type="scientific">Caldanaerobacter subterraneus subsp. tengcongensis (strain DSM 15242 / JCM 11007 / NBRC 100824 / MB4)</name>
    <name type="common">Thermoanaerobacter tengcongensis</name>
    <dbReference type="NCBI Taxonomy" id="273068"/>
    <lineage>
        <taxon>Bacteria</taxon>
        <taxon>Bacillati</taxon>
        <taxon>Bacillota</taxon>
        <taxon>Clostridia</taxon>
        <taxon>Thermoanaerobacterales</taxon>
        <taxon>Thermoanaerobacteraceae</taxon>
        <taxon>Caldanaerobacter</taxon>
    </lineage>
</organism>
<protein>
    <recommendedName>
        <fullName>Macro domain-containing protein TTE0995</fullName>
    </recommendedName>
</protein>
<dbReference type="EMBL" id="AE008691">
    <property type="protein sequence ID" value="AAM24250.1"/>
    <property type="molecule type" value="Genomic_DNA"/>
</dbReference>
<dbReference type="RefSeq" id="WP_011025367.1">
    <property type="nucleotide sequence ID" value="NC_003869.1"/>
</dbReference>
<dbReference type="SMR" id="Q8RB30"/>
<dbReference type="STRING" id="273068.TTE0995"/>
<dbReference type="KEGG" id="tte:TTE0995"/>
<dbReference type="eggNOG" id="COG2110">
    <property type="taxonomic scope" value="Bacteria"/>
</dbReference>
<dbReference type="HOGENOM" id="CLU_046550_5_1_9"/>
<dbReference type="OrthoDB" id="6194521at2"/>
<dbReference type="Proteomes" id="UP000000555">
    <property type="component" value="Chromosome"/>
</dbReference>
<dbReference type="CDD" id="cd02908">
    <property type="entry name" value="Macro_OAADPr_deacetylase"/>
    <property type="match status" value="1"/>
</dbReference>
<dbReference type="Gene3D" id="3.40.220.10">
    <property type="entry name" value="Leucine Aminopeptidase, subunit E, domain 1"/>
    <property type="match status" value="1"/>
</dbReference>
<dbReference type="InterPro" id="IPR002589">
    <property type="entry name" value="Macro_dom"/>
</dbReference>
<dbReference type="InterPro" id="IPR043472">
    <property type="entry name" value="Macro_dom-like"/>
</dbReference>
<dbReference type="NCBIfam" id="NF001664">
    <property type="entry name" value="PRK00431.1-6"/>
    <property type="match status" value="1"/>
</dbReference>
<dbReference type="PANTHER" id="PTHR11106">
    <property type="entry name" value="GANGLIOSIDE INDUCED DIFFERENTIATION ASSOCIATED PROTEIN 2-RELATED"/>
    <property type="match status" value="1"/>
</dbReference>
<dbReference type="PANTHER" id="PTHR11106:SF27">
    <property type="entry name" value="MACRO DOMAIN-CONTAINING PROTEIN"/>
    <property type="match status" value="1"/>
</dbReference>
<dbReference type="Pfam" id="PF01661">
    <property type="entry name" value="Macro"/>
    <property type="match status" value="1"/>
</dbReference>
<dbReference type="SMART" id="SM00506">
    <property type="entry name" value="A1pp"/>
    <property type="match status" value="1"/>
</dbReference>
<dbReference type="SUPFAM" id="SSF52949">
    <property type="entry name" value="Macro domain-like"/>
    <property type="match status" value="1"/>
</dbReference>
<dbReference type="PROSITE" id="PS51154">
    <property type="entry name" value="MACRO"/>
    <property type="match status" value="1"/>
</dbReference>
<name>Y995_CALS4</name>
<evidence type="ECO:0000255" key="1">
    <source>
        <dbReference type="PROSITE-ProRule" id="PRU00490"/>
    </source>
</evidence>
<evidence type="ECO:0000305" key="2"/>
<gene>
    <name type="ordered locus">TTE0995</name>
</gene>
<proteinExistence type="inferred from homology"/>
<sequence>MKEKIKLIKGNIVDQEVDAIVNAANSSLIGGGGVDGAIHKAGGPAIAEELKVIREKQGGCPTGHAVITGAGNLKAKYVIHAVGPIWKGGNHNEDNLLASAYIESLKLADEYNVKTIAFPSISTGAYGFPVERAARIALRVVSDYLEGSSIKEVRFVLFSDRDYEVYSKAYEELDK</sequence>
<reference key="1">
    <citation type="journal article" date="2002" name="Genome Res.">
        <title>A complete sequence of the T. tengcongensis genome.</title>
        <authorList>
            <person name="Bao Q."/>
            <person name="Tian Y."/>
            <person name="Li W."/>
            <person name="Xu Z."/>
            <person name="Xuan Z."/>
            <person name="Hu S."/>
            <person name="Dong W."/>
            <person name="Yang J."/>
            <person name="Chen Y."/>
            <person name="Xue Y."/>
            <person name="Xu Y."/>
            <person name="Lai X."/>
            <person name="Huang L."/>
            <person name="Dong X."/>
            <person name="Ma Y."/>
            <person name="Ling L."/>
            <person name="Tan H."/>
            <person name="Chen R."/>
            <person name="Wang J."/>
            <person name="Yu J."/>
            <person name="Yang H."/>
        </authorList>
    </citation>
    <scope>NUCLEOTIDE SEQUENCE [LARGE SCALE GENOMIC DNA]</scope>
    <source>
        <strain>DSM 15242 / JCM 11007 / NBRC 100824 / MB4</strain>
    </source>
</reference>
<feature type="chain" id="PRO_0000089222" description="Macro domain-containing protein TTE0995">
    <location>
        <begin position="1"/>
        <end position="175"/>
    </location>
</feature>
<feature type="domain" description="Macro" evidence="1">
    <location>
        <begin position="1"/>
        <end position="174"/>
    </location>
</feature>
<accession>Q8RB30</accession>